<reference key="1">
    <citation type="journal article" date="1995" name="FEBS Lett.">
        <title>Cloning and characterisation of the rabbit 5-HT1D alpha and 5-HT1D beta receptors.</title>
        <authorList>
            <person name="Harwood G.S."/>
            <person name="Lockyer M."/>
            <person name="Giles H."/>
            <person name="Fairweather N."/>
        </authorList>
    </citation>
    <scope>NUCLEOTIDE SEQUENCE [GENOMIC DNA]</scope>
    <source>
        <tissue>Liver</tissue>
    </source>
</reference>
<reference key="2">
    <citation type="journal article" date="1996" name="Neurosci. Res. Commun.">
        <title>Molecular cloning and identification of a rabbit saphenous vein 5-HT 1DB receptor gene.</title>
        <authorList>
            <person name="Wurch T."/>
            <person name="Cathala C."/>
            <person name="Palmer C."/>
            <person name="Valentin J.P."/>
            <person name="John G."/>
            <person name="Colpaert F.C."/>
            <person name="Pauwels P.J."/>
        </authorList>
    </citation>
    <scope>NUCLEOTIDE SEQUENCE</scope>
    <source>
        <strain>New Zealand white</strain>
        <tissue>Saphenous vein</tissue>
    </source>
</reference>
<reference key="3">
    <citation type="journal article" date="1996" name="Naunyn Schmiedebergs Arch. Pharmacol.">
        <title>Differences in ligand binding profiles between cloned rabbit and human 5-HT1D alpha and 5-HT1D beta receptors: ketanserin and methiothepin distinguish rabbit 5-HT1D receptor subtypes.</title>
        <authorList>
            <person name="Bard J.A."/>
            <person name="Kucharewicz S.A."/>
            <person name="Zgombick J.M."/>
            <person name="Weinshank R.L."/>
            <person name="Branchek T.A."/>
            <person name="Cohen M.L."/>
        </authorList>
    </citation>
    <scope>NUCLEOTIDE SEQUENCE</scope>
    <source>
        <strain>New Zealand white</strain>
    </source>
</reference>
<name>5HT1B_RABIT</name>
<gene>
    <name type="primary">HTR1B</name>
</gene>
<accession>P49144</accession>
<dbReference type="EMBL" id="Z50163">
    <property type="protein sequence ID" value="CAA90531.1"/>
    <property type="molecule type" value="Genomic_DNA"/>
</dbReference>
<dbReference type="EMBL" id="X89731">
    <property type="protein sequence ID" value="CAA61883.1"/>
    <property type="molecule type" value="mRNA"/>
</dbReference>
<dbReference type="EMBL" id="U60826">
    <property type="protein sequence ID" value="AAB58467.1"/>
    <property type="molecule type" value="Genomic_DNA"/>
</dbReference>
<dbReference type="PIR" id="S58126">
    <property type="entry name" value="S58126"/>
</dbReference>
<dbReference type="PIR" id="S68422">
    <property type="entry name" value="S68422"/>
</dbReference>
<dbReference type="RefSeq" id="NP_001076259.1">
    <property type="nucleotide sequence ID" value="NM_001082790.1"/>
</dbReference>
<dbReference type="SMR" id="P49144"/>
<dbReference type="FunCoup" id="P49144">
    <property type="interactions" value="199"/>
</dbReference>
<dbReference type="STRING" id="9986.ENSOCUP00000016295"/>
<dbReference type="BindingDB" id="P49144"/>
<dbReference type="ChEMBL" id="CHEMBL5717"/>
<dbReference type="GlyCosmos" id="P49144">
    <property type="glycosylation" value="2 sites, No reported glycans"/>
</dbReference>
<dbReference type="PaxDb" id="9986-ENSOCUP00000016295"/>
<dbReference type="GeneID" id="100009594"/>
<dbReference type="KEGG" id="ocu:100009594"/>
<dbReference type="CTD" id="3351"/>
<dbReference type="eggNOG" id="KOG3656">
    <property type="taxonomic scope" value="Eukaryota"/>
</dbReference>
<dbReference type="InParanoid" id="P49144"/>
<dbReference type="OrthoDB" id="5956310at2759"/>
<dbReference type="TreeFam" id="TF316350"/>
<dbReference type="PRO" id="PR:P49144"/>
<dbReference type="Proteomes" id="UP000001811">
    <property type="component" value="Unplaced"/>
</dbReference>
<dbReference type="GO" id="GO:0005886">
    <property type="term" value="C:plasma membrane"/>
    <property type="evidence" value="ECO:0000250"/>
    <property type="project" value="UniProtKB"/>
</dbReference>
<dbReference type="GO" id="GO:0045202">
    <property type="term" value="C:synapse"/>
    <property type="evidence" value="ECO:0007669"/>
    <property type="project" value="GOC"/>
</dbReference>
<dbReference type="GO" id="GO:0004993">
    <property type="term" value="F:G protein-coupled serotonin receptor activity"/>
    <property type="evidence" value="ECO:0000250"/>
    <property type="project" value="UniProtKB"/>
</dbReference>
<dbReference type="GO" id="GO:0071880">
    <property type="term" value="P:adenylate cyclase-activating adrenergic receptor signaling pathway"/>
    <property type="evidence" value="ECO:0007669"/>
    <property type="project" value="TreeGrafter"/>
</dbReference>
<dbReference type="GO" id="GO:0007198">
    <property type="term" value="P:adenylate cyclase-inhibiting serotonin receptor signaling pathway"/>
    <property type="evidence" value="ECO:0000250"/>
    <property type="project" value="UniProtKB"/>
</dbReference>
<dbReference type="GO" id="GO:0046849">
    <property type="term" value="P:bone remodeling"/>
    <property type="evidence" value="ECO:0007669"/>
    <property type="project" value="InterPro"/>
</dbReference>
<dbReference type="GO" id="GO:0071312">
    <property type="term" value="P:cellular response to alkaloid"/>
    <property type="evidence" value="ECO:0000250"/>
    <property type="project" value="UniProtKB"/>
</dbReference>
<dbReference type="GO" id="GO:0071466">
    <property type="term" value="P:cellular response to xenobiotic stimulus"/>
    <property type="evidence" value="ECO:0000250"/>
    <property type="project" value="UniProtKB"/>
</dbReference>
<dbReference type="GO" id="GO:0007268">
    <property type="term" value="P:chemical synaptic transmission"/>
    <property type="evidence" value="ECO:0007669"/>
    <property type="project" value="InterPro"/>
</dbReference>
<dbReference type="GO" id="GO:0014063">
    <property type="term" value="P:negative regulation of serotonin secretion"/>
    <property type="evidence" value="ECO:0000250"/>
    <property type="project" value="UniProtKB"/>
</dbReference>
<dbReference type="GO" id="GO:0043410">
    <property type="term" value="P:positive regulation of MAPK cascade"/>
    <property type="evidence" value="ECO:0007669"/>
    <property type="project" value="TreeGrafter"/>
</dbReference>
<dbReference type="GO" id="GO:0050795">
    <property type="term" value="P:regulation of behavior"/>
    <property type="evidence" value="ECO:0007669"/>
    <property type="project" value="InterPro"/>
</dbReference>
<dbReference type="GO" id="GO:0042310">
    <property type="term" value="P:vasoconstriction"/>
    <property type="evidence" value="ECO:0007669"/>
    <property type="project" value="InterPro"/>
</dbReference>
<dbReference type="CDD" id="cd15333">
    <property type="entry name" value="7tmA_5-HT1B_1D"/>
    <property type="match status" value="1"/>
</dbReference>
<dbReference type="Gene3D" id="1.20.1070.10">
    <property type="entry name" value="Rhodopsin 7-helix transmembrane proteins"/>
    <property type="match status" value="1"/>
</dbReference>
<dbReference type="InterPro" id="IPR002147">
    <property type="entry name" value="5HT1B_rcpt"/>
</dbReference>
<dbReference type="InterPro" id="IPR002231">
    <property type="entry name" value="5HT_rcpt"/>
</dbReference>
<dbReference type="InterPro" id="IPR000276">
    <property type="entry name" value="GPCR_Rhodpsn"/>
</dbReference>
<dbReference type="InterPro" id="IPR017452">
    <property type="entry name" value="GPCR_Rhodpsn_7TM"/>
</dbReference>
<dbReference type="PANTHER" id="PTHR24248:SF201">
    <property type="entry name" value="5-HYDROXYTRYPTAMINE RECEPTOR 1B"/>
    <property type="match status" value="1"/>
</dbReference>
<dbReference type="PANTHER" id="PTHR24248">
    <property type="entry name" value="ADRENERGIC RECEPTOR-RELATED G-PROTEIN COUPLED RECEPTOR"/>
    <property type="match status" value="1"/>
</dbReference>
<dbReference type="Pfam" id="PF00001">
    <property type="entry name" value="7tm_1"/>
    <property type="match status" value="1"/>
</dbReference>
<dbReference type="PRINTS" id="PR00513">
    <property type="entry name" value="5HT1BRECEPTR"/>
</dbReference>
<dbReference type="PRINTS" id="PR01101">
    <property type="entry name" value="5HTRECEPTOR"/>
</dbReference>
<dbReference type="PRINTS" id="PR00237">
    <property type="entry name" value="GPCRRHODOPSN"/>
</dbReference>
<dbReference type="SMART" id="SM01381">
    <property type="entry name" value="7TM_GPCR_Srsx"/>
    <property type="match status" value="1"/>
</dbReference>
<dbReference type="SUPFAM" id="SSF81321">
    <property type="entry name" value="Family A G protein-coupled receptor-like"/>
    <property type="match status" value="1"/>
</dbReference>
<dbReference type="PROSITE" id="PS00237">
    <property type="entry name" value="G_PROTEIN_RECEP_F1_1"/>
    <property type="match status" value="1"/>
</dbReference>
<dbReference type="PROSITE" id="PS50262">
    <property type="entry name" value="G_PROTEIN_RECEP_F1_2"/>
    <property type="match status" value="1"/>
</dbReference>
<feature type="chain" id="PRO_0000068920" description="5-hydroxytryptamine receptor 1B">
    <location>
        <begin position="1"/>
        <end position="390"/>
    </location>
</feature>
<feature type="topological domain" description="Extracellular" evidence="1">
    <location>
        <begin position="1"/>
        <end position="46"/>
    </location>
</feature>
<feature type="transmembrane region" description="Helical; Name=1" evidence="1">
    <location>
        <begin position="47"/>
        <end position="72"/>
    </location>
</feature>
<feature type="topological domain" description="Cytoplasmic" evidence="1">
    <location>
        <begin position="73"/>
        <end position="86"/>
    </location>
</feature>
<feature type="transmembrane region" description="Helical; Name=2" evidence="1">
    <location>
        <begin position="87"/>
        <end position="111"/>
    </location>
</feature>
<feature type="topological domain" description="Extracellular" evidence="1">
    <location>
        <begin position="112"/>
        <end position="119"/>
    </location>
</feature>
<feature type="transmembrane region" description="Helical; Name=3" evidence="1">
    <location>
        <begin position="120"/>
        <end position="145"/>
    </location>
</feature>
<feature type="topological domain" description="Cytoplasmic" evidence="1">
    <location>
        <begin position="146"/>
        <end position="165"/>
    </location>
</feature>
<feature type="transmembrane region" description="Helical; Name=4" evidence="1">
    <location>
        <begin position="166"/>
        <end position="184"/>
    </location>
</feature>
<feature type="topological domain" description="Extracellular" evidence="1">
    <location>
        <begin position="185"/>
        <end position="205"/>
    </location>
</feature>
<feature type="transmembrane region" description="Helical; Name=5" evidence="1">
    <location>
        <begin position="206"/>
        <end position="229"/>
    </location>
</feature>
<feature type="topological domain" description="Cytoplasmic" evidence="1">
    <location>
        <begin position="230"/>
        <end position="315"/>
    </location>
</feature>
<feature type="transmembrane region" description="Helical; Name=6" evidence="1">
    <location>
        <begin position="316"/>
        <end position="337"/>
    </location>
</feature>
<feature type="topological domain" description="Extracellular" evidence="1">
    <location>
        <begin position="338"/>
        <end position="347"/>
    </location>
</feature>
<feature type="transmembrane region" description="Helical; Name=7" evidence="1">
    <location>
        <begin position="348"/>
        <end position="370"/>
    </location>
</feature>
<feature type="topological domain" description="Cytoplasmic" evidence="1">
    <location>
        <begin position="371"/>
        <end position="390"/>
    </location>
</feature>
<feature type="region of interest" description="Disordered" evidence="5">
    <location>
        <begin position="260"/>
        <end position="282"/>
    </location>
</feature>
<feature type="short sequence motif" description="DRY motif; important for ligand-induced conformation changes and signaling" evidence="2">
    <location>
        <begin position="146"/>
        <end position="148"/>
    </location>
</feature>
<feature type="short sequence motif" description="NPxxY motif; important for ligand-induced conformation changes and signaling" evidence="2">
    <location>
        <begin position="365"/>
        <end position="369"/>
    </location>
</feature>
<feature type="compositionally biased region" description="Polar residues" evidence="5">
    <location>
        <begin position="260"/>
        <end position="272"/>
    </location>
</feature>
<feature type="binding site" evidence="1">
    <location>
        <position position="129"/>
    </location>
    <ligand>
        <name>ergotamine</name>
        <dbReference type="ChEBI" id="CHEBI:190463"/>
        <note>agonist</note>
    </ligand>
</feature>
<feature type="binding site" evidence="1">
    <location>
        <position position="134"/>
    </location>
    <ligand>
        <name>ergotamine</name>
        <dbReference type="ChEBI" id="CHEBI:190463"/>
        <note>agonist</note>
    </ligand>
</feature>
<feature type="binding site" evidence="1">
    <location>
        <position position="201"/>
    </location>
    <ligand>
        <name>ergotamine</name>
        <dbReference type="ChEBI" id="CHEBI:190463"/>
        <note>agonist</note>
    </ligand>
</feature>
<feature type="site" description="Important for species-specific agonist sensitivity" evidence="1">
    <location>
        <position position="355"/>
    </location>
</feature>
<feature type="lipid moiety-binding region" description="S-palmitoyl cysteine" evidence="3">
    <location>
        <position position="388"/>
    </location>
</feature>
<feature type="glycosylation site" description="N-linked (GlcNAc...) asparagine" evidence="3">
    <location>
        <position position="24"/>
    </location>
</feature>
<feature type="glycosylation site" description="N-linked (GlcNAc...) asparagine" evidence="3">
    <location>
        <position position="32"/>
    </location>
</feature>
<feature type="disulfide bond" evidence="4">
    <location>
        <begin position="122"/>
        <end position="199"/>
    </location>
</feature>
<feature type="sequence conflict" description="In Ref. 1 and 3." evidence="6" ref="1 3">
    <original>G</original>
    <variation>S</variation>
    <location>
        <position position="5"/>
    </location>
</feature>
<feature type="sequence conflict" description="In Ref. 1 and 3." evidence="6" ref="1 3">
    <original>Q</original>
    <variation>R</variation>
    <location>
        <position position="7"/>
    </location>
</feature>
<feature type="sequence conflict" description="In Ref. 1 and 3." evidence="6" ref="1 3">
    <location>
        <position position="14"/>
    </location>
</feature>
<feature type="sequence conflict" description="In Ref. 1 and 3." evidence="6" ref="1 3">
    <original>R</original>
    <variation>A</variation>
    <location>
        <position position="171"/>
    </location>
</feature>
<organism>
    <name type="scientific">Oryctolagus cuniculus</name>
    <name type="common">Rabbit</name>
    <dbReference type="NCBI Taxonomy" id="9986"/>
    <lineage>
        <taxon>Eukaryota</taxon>
        <taxon>Metazoa</taxon>
        <taxon>Chordata</taxon>
        <taxon>Craniata</taxon>
        <taxon>Vertebrata</taxon>
        <taxon>Euteleostomi</taxon>
        <taxon>Mammalia</taxon>
        <taxon>Eutheria</taxon>
        <taxon>Euarchontoglires</taxon>
        <taxon>Glires</taxon>
        <taxon>Lagomorpha</taxon>
        <taxon>Leporidae</taxon>
        <taxon>Oryctolagus</taxon>
    </lineage>
</organism>
<sequence length="390" mass="43496">MEEPGAQCAPPLAAGSQIAVPQANLSAAHSHNCSAEGYIYQDSIALPWKVLLVLLLALFTLATTLSNAFVVATVYRTRKLHTPANYLIASLAVTDLLVSILVMPISTMYTVTGRWTLGQVVCDLWLSSDITCCTASIMHLCVIALDRYWAITDAVEYSAKRTPKRAAIMIRLVWVFSICISLPPFFWRQAKAEEEVSECLVNTDHVLYTVYSTVGAFYLPTLLLIALYGRIYVEARSRILKQTPNRTGKRLTRAQLITDSPGSTTSVTSINSRAPDVPSESGSPVYVNQVKVRVSDALLEKKKLMAARERKATKTLGIILGVFIVCWLPFFIISLVMPICKDACWFHQAIFDFFTWLGYVNSLINPIIYTMSNEDFKQAFHKLIRFKCTS</sequence>
<protein>
    <recommendedName>
        <fullName>5-hydroxytryptamine receptor 1B</fullName>
        <shortName>5-HT-1B</shortName>
        <shortName>5-HT1B</shortName>
    </recommendedName>
    <alternativeName>
        <fullName>Serotonin 1D beta receptor</fullName>
        <shortName>5-HT-1D-beta</shortName>
    </alternativeName>
    <alternativeName>
        <fullName>Serotonin receptor 1B</fullName>
    </alternativeName>
</protein>
<evidence type="ECO:0000250" key="1">
    <source>
        <dbReference type="UniProtKB" id="P28222"/>
    </source>
</evidence>
<evidence type="ECO:0000250" key="2">
    <source>
        <dbReference type="UniProtKB" id="P41595"/>
    </source>
</evidence>
<evidence type="ECO:0000255" key="3"/>
<evidence type="ECO:0000255" key="4">
    <source>
        <dbReference type="PROSITE-ProRule" id="PRU00521"/>
    </source>
</evidence>
<evidence type="ECO:0000256" key="5">
    <source>
        <dbReference type="SAM" id="MobiDB-lite"/>
    </source>
</evidence>
<evidence type="ECO:0000305" key="6"/>
<keyword id="KW-0085">Behavior</keyword>
<keyword id="KW-1003">Cell membrane</keyword>
<keyword id="KW-1015">Disulfide bond</keyword>
<keyword id="KW-0297">G-protein coupled receptor</keyword>
<keyword id="KW-0325">Glycoprotein</keyword>
<keyword id="KW-0449">Lipoprotein</keyword>
<keyword id="KW-0472">Membrane</keyword>
<keyword id="KW-0564">Palmitate</keyword>
<keyword id="KW-0597">Phosphoprotein</keyword>
<keyword id="KW-0675">Receptor</keyword>
<keyword id="KW-1185">Reference proteome</keyword>
<keyword id="KW-0807">Transducer</keyword>
<keyword id="KW-0812">Transmembrane</keyword>
<keyword id="KW-1133">Transmembrane helix</keyword>
<comment type="function">
    <text evidence="1">G-protein coupled receptor for 5-hydroxytryptamine (serotonin). Also functions as a receptor for ergot alkaloid derivatives, various anxiolytic and antidepressant drugs and other psychoactive substances, such as lysergic acid diethylamide (LSD). Ligand binding causes a conformation change that triggers signaling via guanine nucleotide-binding proteins (G proteins) and modulates the activity of downstream effectors, such as adenylate cyclase. HTR1B is coupled to G(i)/G(o) G alpha proteins and mediates inhibitory neurotransmission by inhibiting adenylate cyclase activity. Arrestin family members inhibit signaling via G proteins and mediate activation of alternative signaling pathways. Regulates the release of 5-hydroxytryptamine, dopamine and acetylcholine in the brain, and thereby affects neural activity, nociceptive processing, pain perception, mood and behavior. Besides, plays a role in vasoconstriction of cerebral arteries.</text>
</comment>
<comment type="subunit">
    <text evidence="1">Homodimer. Heterodimer with HTR1D.</text>
</comment>
<comment type="subcellular location">
    <subcellularLocation>
        <location evidence="1">Cell membrane</location>
        <topology evidence="1">Multi-pass membrane protein</topology>
    </subcellularLocation>
</comment>
<comment type="domain">
    <text evidence="1">Ligands are bound in a hydrophobic pocket formed by the transmembrane helices.</text>
</comment>
<comment type="domain">
    <text evidence="1">A residue in the 7th transmembrane region ('Thr-355' in human, 'Asn-351' in mouse and rat) is important for species-specific sensitivity to various agonists.</text>
</comment>
<comment type="PTM">
    <text evidence="1">Phosphorylated. Desensitization of the receptor may be mediated by its phosphorylation.</text>
</comment>
<comment type="PTM">
    <text evidence="1">Palmitoylated.</text>
</comment>
<comment type="similarity">
    <text evidence="4">Belongs to the G-protein coupled receptor 1 family.</text>
</comment>
<proteinExistence type="evidence at transcript level"/>